<feature type="chain" id="PRO_0000422331" description="Monodechloroaminopyrrolnitrin synthase PrnB">
    <location>
        <begin position="1"/>
        <end position="361"/>
    </location>
</feature>
<feature type="binding site">
    <location>
        <begin position="222"/>
        <end position="225"/>
    </location>
    <ligand>
        <name>substrate</name>
    </ligand>
</feature>
<feature type="binding site" description="axial binding residue">
    <location>
        <position position="313"/>
    </location>
    <ligand>
        <name>heme</name>
        <dbReference type="ChEBI" id="CHEBI:30413"/>
    </ligand>
    <ligandPart>
        <name>Fe</name>
        <dbReference type="ChEBI" id="CHEBI:18248"/>
    </ligandPart>
</feature>
<feature type="binding site">
    <location>
        <position position="321"/>
    </location>
    <ligand>
        <name>substrate</name>
    </ligand>
</feature>
<feature type="binding site">
    <location>
        <position position="332"/>
    </location>
    <ligand>
        <name>substrate</name>
    </ligand>
</feature>
<feature type="mutagenesis site" description="Loss of synthase activity." evidence="1">
    <original>H</original>
    <variation>A</variation>
    <location>
        <position position="313"/>
    </location>
</feature>
<feature type="mutagenesis site" description="Loss of synthase activity." evidence="2">
    <original>Y</original>
    <variation>F</variation>
    <location>
        <position position="321"/>
    </location>
</feature>
<feature type="mutagenesis site" description="Loss of synthase activity." evidence="2">
    <original>S</original>
    <variation>A</variation>
    <location>
        <position position="332"/>
    </location>
</feature>
<feature type="helix" evidence="6">
    <location>
        <begin position="8"/>
        <end position="19"/>
    </location>
</feature>
<feature type="helix" evidence="6">
    <location>
        <begin position="27"/>
        <end position="30"/>
    </location>
</feature>
<feature type="helix" evidence="6">
    <location>
        <begin position="33"/>
        <end position="38"/>
    </location>
</feature>
<feature type="helix" evidence="6">
    <location>
        <begin position="42"/>
        <end position="50"/>
    </location>
</feature>
<feature type="helix" evidence="6">
    <location>
        <begin position="64"/>
        <end position="83"/>
    </location>
</feature>
<feature type="helix" evidence="6">
    <location>
        <begin position="88"/>
        <end position="91"/>
    </location>
</feature>
<feature type="helix" evidence="6">
    <location>
        <begin position="95"/>
        <end position="106"/>
    </location>
</feature>
<feature type="helix" evidence="6">
    <location>
        <begin position="114"/>
        <end position="117"/>
    </location>
</feature>
<feature type="turn" evidence="6">
    <location>
        <begin position="118"/>
        <end position="120"/>
    </location>
</feature>
<feature type="turn" evidence="6">
    <location>
        <begin position="125"/>
        <end position="127"/>
    </location>
</feature>
<feature type="helix" evidence="6">
    <location>
        <begin position="135"/>
        <end position="162"/>
    </location>
</feature>
<feature type="helix" evidence="6">
    <location>
        <begin position="169"/>
        <end position="195"/>
    </location>
</feature>
<feature type="helix" evidence="6">
    <location>
        <begin position="198"/>
        <end position="204"/>
    </location>
</feature>
<feature type="helix" evidence="6">
    <location>
        <begin position="206"/>
        <end position="209"/>
    </location>
</feature>
<feature type="strand" evidence="6">
    <location>
        <begin position="212"/>
        <end position="214"/>
    </location>
</feature>
<feature type="strand" evidence="6">
    <location>
        <begin position="217"/>
        <end position="219"/>
    </location>
</feature>
<feature type="helix" evidence="6">
    <location>
        <begin position="224"/>
        <end position="226"/>
    </location>
</feature>
<feature type="helix" evidence="6">
    <location>
        <begin position="229"/>
        <end position="236"/>
    </location>
</feature>
<feature type="turn" evidence="6">
    <location>
        <begin position="237"/>
        <end position="240"/>
    </location>
</feature>
<feature type="helix" evidence="6">
    <location>
        <begin position="244"/>
        <end position="253"/>
    </location>
</feature>
<feature type="helix" evidence="6">
    <location>
        <begin position="254"/>
        <end position="256"/>
    </location>
</feature>
<feature type="helix" evidence="6">
    <location>
        <begin position="259"/>
        <end position="269"/>
    </location>
</feature>
<feature type="helix" evidence="6">
    <location>
        <begin position="274"/>
        <end position="285"/>
    </location>
</feature>
<feature type="strand" evidence="7">
    <location>
        <begin position="287"/>
        <end position="289"/>
    </location>
</feature>
<feature type="helix" evidence="6">
    <location>
        <begin position="290"/>
        <end position="321"/>
    </location>
</feature>
<feature type="helix" evidence="6">
    <location>
        <begin position="338"/>
        <end position="356"/>
    </location>
</feature>
<dbReference type="EC" id="1.14.19.-" evidence="1 4"/>
<dbReference type="EMBL" id="U74493">
    <property type="protein sequence ID" value="AAB97505.1"/>
    <property type="molecule type" value="Genomic_DNA"/>
</dbReference>
<dbReference type="PDB" id="2V7I">
    <property type="method" value="X-ray"/>
    <property type="resolution" value="1.75 A"/>
    <property type="chains" value="A=1-361"/>
</dbReference>
<dbReference type="PDB" id="2V7J">
    <property type="method" value="X-ray"/>
    <property type="resolution" value="2.00 A"/>
    <property type="chains" value="A=1-361"/>
</dbReference>
<dbReference type="PDB" id="2V7K">
    <property type="method" value="X-ray"/>
    <property type="resolution" value="1.70 A"/>
    <property type="chains" value="A=1-361"/>
</dbReference>
<dbReference type="PDB" id="2V7L">
    <property type="method" value="X-ray"/>
    <property type="resolution" value="2.40 A"/>
    <property type="chains" value="A=1-361"/>
</dbReference>
<dbReference type="PDB" id="2V7M">
    <property type="method" value="X-ray"/>
    <property type="resolution" value="2.00 A"/>
    <property type="chains" value="A=1-361"/>
</dbReference>
<dbReference type="PDB" id="2X66">
    <property type="method" value="X-ray"/>
    <property type="resolution" value="2.09 A"/>
    <property type="chains" value="A=1-361"/>
</dbReference>
<dbReference type="PDB" id="2X67">
    <property type="method" value="X-ray"/>
    <property type="resolution" value="2.16 A"/>
    <property type="chains" value="A=1-361"/>
</dbReference>
<dbReference type="PDB" id="2X68">
    <property type="method" value="X-ray"/>
    <property type="resolution" value="2.13 A"/>
    <property type="chains" value="A=1-361"/>
</dbReference>
<dbReference type="PDBsum" id="2V7I"/>
<dbReference type="PDBsum" id="2V7J"/>
<dbReference type="PDBsum" id="2V7K"/>
<dbReference type="PDBsum" id="2V7L"/>
<dbReference type="PDBsum" id="2V7M"/>
<dbReference type="PDBsum" id="2X66"/>
<dbReference type="PDBsum" id="2X67"/>
<dbReference type="PDBsum" id="2X68"/>
<dbReference type="SMR" id="P95481"/>
<dbReference type="KEGG" id="ag:AAB97505"/>
<dbReference type="BioCyc" id="MetaCyc:MONOMER-16708"/>
<dbReference type="EvolutionaryTrace" id="P95481"/>
<dbReference type="GO" id="GO:0020037">
    <property type="term" value="F:heme binding"/>
    <property type="evidence" value="ECO:0007669"/>
    <property type="project" value="InterPro"/>
</dbReference>
<dbReference type="GO" id="GO:0046872">
    <property type="term" value="F:metal ion binding"/>
    <property type="evidence" value="ECO:0007669"/>
    <property type="project" value="UniProtKB-KW"/>
</dbReference>
<dbReference type="GO" id="GO:0016491">
    <property type="term" value="F:oxidoreductase activity"/>
    <property type="evidence" value="ECO:0007669"/>
    <property type="project" value="UniProtKB-KW"/>
</dbReference>
<dbReference type="GO" id="GO:0017000">
    <property type="term" value="P:antibiotic biosynthetic process"/>
    <property type="evidence" value="ECO:0007669"/>
    <property type="project" value="UniProtKB-KW"/>
</dbReference>
<dbReference type="GO" id="GO:0019441">
    <property type="term" value="P:L-tryptophan catabolic process to kynurenine"/>
    <property type="evidence" value="ECO:0007669"/>
    <property type="project" value="InterPro"/>
</dbReference>
<dbReference type="Gene3D" id="1.20.58.1320">
    <property type="match status" value="1"/>
</dbReference>
<dbReference type="Gene3D" id="1.20.58.480">
    <property type="match status" value="1"/>
</dbReference>
<dbReference type="InterPro" id="IPR015029">
    <property type="entry name" value="PrnB"/>
</dbReference>
<dbReference type="InterPro" id="IPR037217">
    <property type="entry name" value="Trp/Indoleamine_2_3_dOase-like"/>
</dbReference>
<dbReference type="Pfam" id="PF08933">
    <property type="entry name" value="PrnB"/>
    <property type="match status" value="1"/>
</dbReference>
<dbReference type="SUPFAM" id="SSF140959">
    <property type="entry name" value="Indolic compounds 2,3-dioxygenase-like"/>
    <property type="match status" value="1"/>
</dbReference>
<keyword id="KW-0002">3D-structure</keyword>
<keyword id="KW-0045">Antibiotic biosynthesis</keyword>
<keyword id="KW-0349">Heme</keyword>
<keyword id="KW-0408">Iron</keyword>
<keyword id="KW-0479">Metal-binding</keyword>
<keyword id="KW-0560">Oxidoreductase</keyword>
<evidence type="ECO:0000269" key="1">
    <source>
    </source>
</evidence>
<evidence type="ECO:0000269" key="2">
    <source>
    </source>
</evidence>
<evidence type="ECO:0000269" key="3">
    <source>
    </source>
</evidence>
<evidence type="ECO:0000269" key="4">
    <source>
    </source>
</evidence>
<evidence type="ECO:0000305" key="5"/>
<evidence type="ECO:0007829" key="6">
    <source>
        <dbReference type="PDB" id="2V7K"/>
    </source>
</evidence>
<evidence type="ECO:0007829" key="7">
    <source>
        <dbReference type="PDB" id="2V7M"/>
    </source>
</evidence>
<reference key="1">
    <citation type="journal article" date="1997" name="Appl. Environ. Microbiol.">
        <title>Four genes from Pseudomonas fluorescens that encode the biosynthesis of pyrrolnitrin.</title>
        <authorList>
            <person name="Hammer P.E."/>
            <person name="Hill D.S."/>
            <person name="Lam S.T."/>
            <person name="Van Pee K.H."/>
            <person name="Ligon J.M."/>
        </authorList>
    </citation>
    <scope>NUCLEOTIDE SEQUENCE [GENOMIC DNA]</scope>
    <scope>FUNCTION</scope>
    <scope>DISRUPTION PHENOTYPE</scope>
    <scope>NOMENCLATURE</scope>
    <source>
        <strain>Bl915</strain>
    </source>
</reference>
<reference key="2">
    <citation type="journal article" date="1998" name="J. Bacteriol.">
        <title>Functions encoded by pyrrolnitrin biosynthetic genes from Pseudomonas fluorescens.</title>
        <authorList>
            <person name="Kirner S."/>
            <person name="Hammer P.E."/>
            <person name="Hill D.S."/>
            <person name="Altmann A."/>
            <person name="Fischer I."/>
            <person name="Weislo L.J."/>
            <person name="Lanahan M."/>
            <person name="van Pee K.H."/>
            <person name="Ligon J.M."/>
        </authorList>
    </citation>
    <scope>NUCLEOTIDE SEQUENCE [GENOMIC DNA]</scope>
    <scope>FUNCTION</scope>
    <scope>CATALYTIC ACTIVITY</scope>
    <scope>DISRUPTION PHENOTYPE</scope>
    <scope>SUBSTRATE SPECIFICITY</scope>
    <source>
        <strain>Bl915</strain>
    </source>
</reference>
<reference key="3">
    <citation type="journal article" date="2007" name="Biochemistry">
        <title>The second enzyme in pyrrolnitrin biosynthetic pathway is related to the heme-dependent dioxygenase superfamily.</title>
        <authorList>
            <person name="De Laurentis W."/>
            <person name="Khim L."/>
            <person name="Anderson J.L."/>
            <person name="Adam A."/>
            <person name="Johnson K.A."/>
            <person name="Phillips R.S."/>
            <person name="Chapman S.K."/>
            <person name="van Pee K.H."/>
            <person name="Naismith J.H."/>
        </authorList>
    </citation>
    <scope>X-RAY CRYSTALLOGRAPHY (1.70 ANGSTROMS) IN COMPLEX WITH HEME AND SUBSTRATE ANALOGS</scope>
    <scope>FUNCTION</scope>
    <scope>CATALYTIC ACTIVITY</scope>
    <scope>MUTAGENESIS OF HIS-313</scope>
    <scope>REACTION MECHANISM</scope>
    <scope>SUBUNIT</scope>
    <scope>COFACTOR</scope>
</reference>
<reference key="4">
    <citation type="journal article" date="2010" name="J. Biol. Chem.">
        <title>The ternary complex of PrnB (the second enzyme in the pyrrolnitrin biosynthesis pathway), tryptophan, and cyanide yields new mechanistic insights into the indolamine dioxygenase superfamily.</title>
        <authorList>
            <person name="Zhu X."/>
            <person name="van Pee K.H."/>
            <person name="Naismith J.H."/>
        </authorList>
    </citation>
    <scope>X-RAY CRYSTALLOGRAPHY (2.09 ANGSTROMS) IN COMPLEX WITH HEME AND SUBSTRATE ANALOGS</scope>
    <scope>MUTAGENESIS OF TYR-321 AND SER-332</scope>
    <scope>SUBUNIT</scope>
    <scope>COFACTOR</scope>
</reference>
<name>PRNB_PSEFL</name>
<gene>
    <name type="primary">prnB</name>
</gene>
<comment type="function">
    <text evidence="1 3 4">Involved in the biosynthesis of the antifungal antibiotic pyrrolnitrin. Catalyzes the ring rearrangement and decarboxylation to convert 7-chloro-L-tryptophan (7-CLT) to monodechloroaminopyrrolnitrin (MDA). It can also use 7-chloro-D-tryptophan, but 7-chloro-L-tryptophan is the preferred natural enantiomer.</text>
</comment>
<comment type="catalytic activity">
    <reaction evidence="1 4">
        <text>7-chloro-L-tryptophan + AH2 + O2 = monodechloroaminopyrrolnitrin + A + CO2 + 2 H2O</text>
        <dbReference type="Rhea" id="RHEA:50952"/>
        <dbReference type="ChEBI" id="CHEBI:13193"/>
        <dbReference type="ChEBI" id="CHEBI:15377"/>
        <dbReference type="ChEBI" id="CHEBI:15379"/>
        <dbReference type="ChEBI" id="CHEBI:16526"/>
        <dbReference type="ChEBI" id="CHEBI:17499"/>
        <dbReference type="ChEBI" id="CHEBI:58713"/>
        <dbReference type="ChEBI" id="CHEBI:85785"/>
    </reaction>
</comment>
<comment type="cofactor">
    <cofactor evidence="1 2">
        <name>heme b</name>
        <dbReference type="ChEBI" id="CHEBI:60344"/>
    </cofactor>
</comment>
<comment type="pathway">
    <text>Antibiotic biosynthesis.</text>
</comment>
<comment type="subunit">
    <text evidence="1 2">Monomer.</text>
</comment>
<comment type="disruption phenotype">
    <text evidence="3 4">Cells lacking this gene lose the ability to produce pyrrolnitrin.</text>
</comment>
<comment type="similarity">
    <text evidence="5">Belongs to the PrnB family.</text>
</comment>
<sequence length="361" mass="39921">MERTLDRVGVFAATHAAVAACDPLQARALVLQLPGLNRNKDVPGIVGLLREFLPVRGLPCGWGFVEAAAAMRDIGFFLGSLKRHGHEPAEVVPGLEPVLLDLARATNLPPRETLLHVTVWNPTAADAQRSYTGLPDEAHLLESVRISMAALEAAIALTVELFDVSLRSPEFAQRCDELEAYLQKMVESIVYAYRFISPQVFYDELRPFYEPIRVGGQSYLGPGAVEMPLFVLEHVLWGSQSDDQTYREFKETYLPYVLPAYRAVYARFSGEPALIDRALDEARAVGTRDEHVRAGLTALERVFKVLLRFRAPHLKLAERAYEVGQSGPEIGSGGYAPSMLGELLTLTYAARSRVRAALDES</sequence>
<organism>
    <name type="scientific">Pseudomonas fluorescens</name>
    <dbReference type="NCBI Taxonomy" id="294"/>
    <lineage>
        <taxon>Bacteria</taxon>
        <taxon>Pseudomonadati</taxon>
        <taxon>Pseudomonadota</taxon>
        <taxon>Gammaproteobacteria</taxon>
        <taxon>Pseudomonadales</taxon>
        <taxon>Pseudomonadaceae</taxon>
        <taxon>Pseudomonas</taxon>
    </lineage>
</organism>
<accession>P95481</accession>
<proteinExistence type="evidence at protein level"/>
<protein>
    <recommendedName>
        <fullName>Monodechloroaminopyrrolnitrin synthase PrnB</fullName>
        <ecNumber evidence="1 4">1.14.19.-</ecNumber>
    </recommendedName>
    <alternativeName>
        <fullName evidence="5">7-chloro-L-tryptophan dioxygenase PrnB</fullName>
    </alternativeName>
</protein>